<proteinExistence type="evidence at protein level"/>
<feature type="chain" id="PRO_0000311015" description="Genome polyprotein">
    <location>
        <begin position="1"/>
        <end position="2227"/>
    </location>
</feature>
<feature type="chain" id="PRO_0000311016" description="Capsid protein VP0">
    <location>
        <begin position="1"/>
        <end position="245"/>
    </location>
</feature>
<feature type="chain" id="PRO_0000039968" description="Capsid protein VP4">
    <location>
        <begin position="1"/>
        <end position="23"/>
    </location>
</feature>
<feature type="chain" id="PRO_0000039969" description="Capsid protein VP2">
    <location>
        <begin position="24"/>
        <end position="245"/>
    </location>
</feature>
<feature type="chain" id="PRO_0000039970" description="Capsid protein VP3">
    <location>
        <begin position="246"/>
        <end position="491"/>
    </location>
</feature>
<feature type="chain" id="PRO_0000039971" description="Protein VP1-2A">
    <location>
        <begin position="492"/>
        <end position="836"/>
    </location>
</feature>
<feature type="chain" id="PRO_0000311017" description="Capsid protein VP1">
    <location>
        <begin position="492"/>
        <end position="765"/>
    </location>
</feature>
<feature type="chain" id="PRO_0000039972" description="Assembly signal 2A">
    <location>
        <begin position="766"/>
        <end position="836"/>
    </location>
</feature>
<feature type="chain" id="PRO_0000311018" description="Protein 2BC">
    <location>
        <begin position="837"/>
        <end position="1422"/>
    </location>
</feature>
<feature type="chain" id="PRO_0000039973" description="Protein 2B">
    <location>
        <begin position="837"/>
        <end position="1087"/>
    </location>
</feature>
<feature type="chain" id="PRO_0000039974" description="Protein 2C">
    <location>
        <begin position="1088"/>
        <end position="1422"/>
    </location>
</feature>
<feature type="chain" id="PRO_0000311019" description="Protein 3ABCD">
    <location>
        <begin position="1423"/>
        <end position="2227"/>
    </location>
</feature>
<feature type="chain" id="PRO_0000311020" description="Protein 3ABC">
    <location>
        <begin position="1423"/>
        <end position="1738"/>
    </location>
</feature>
<feature type="chain" id="PRO_0000311021" description="Protein 3AB">
    <location>
        <begin position="1423"/>
        <end position="1519"/>
    </location>
</feature>
<feature type="chain" id="PRO_0000039975" description="Protein 3A">
    <location>
        <begin position="1423"/>
        <end position="1496"/>
    </location>
</feature>
<feature type="chain" id="PRO_0000039976" description="Viral protein genome-linked">
    <location>
        <begin position="1497"/>
        <end position="1519"/>
    </location>
</feature>
<feature type="chain" id="PRO_0000311022" description="Protein 3CD">
    <location>
        <begin position="1520"/>
        <end position="2227"/>
    </location>
</feature>
<feature type="chain" id="PRO_0000039977" description="Protease 3C">
    <location>
        <begin position="1520"/>
        <end position="1738"/>
    </location>
</feature>
<feature type="chain" id="PRO_0000039978" description="RNA-directed RNA polymerase 3D-POL">
    <location>
        <begin position="1739"/>
        <end position="2227"/>
    </location>
</feature>
<feature type="transmembrane region" description="Helical" evidence="5">
    <location>
        <begin position="1010"/>
        <end position="1030"/>
    </location>
</feature>
<feature type="transmembrane region" description="Helical" evidence="5">
    <location>
        <begin position="1462"/>
        <end position="1482"/>
    </location>
</feature>
<feature type="domain" description="SF3 helicase" evidence="7">
    <location>
        <begin position="1204"/>
        <end position="1366"/>
    </location>
</feature>
<feature type="domain" description="Peptidase C3" evidence="8">
    <location>
        <begin position="1514"/>
        <end position="1728"/>
    </location>
</feature>
<feature type="domain" description="RdRp catalytic" evidence="6">
    <location>
        <begin position="1976"/>
        <end position="2097"/>
    </location>
</feature>
<feature type="region of interest" description="Involved in P1-2A pentamerization" evidence="4">
    <location>
        <begin position="766"/>
        <end position="836"/>
    </location>
</feature>
<feature type="region of interest" description="Membrane-penetrating ability" evidence="4">
    <location>
        <begin position="1043"/>
        <end position="1070"/>
    </location>
</feature>
<feature type="coiled-coil region" evidence="5">
    <location>
        <begin position="1127"/>
        <end position="1152"/>
    </location>
</feature>
<feature type="short sequence motif" description="(L)YPX(n)L motif" evidence="4">
    <location>
        <begin position="167"/>
        <end position="171"/>
    </location>
</feature>
<feature type="short sequence motif" description="(L)YPX(n)L motif" evidence="4">
    <location>
        <begin position="200"/>
        <end position="205"/>
    </location>
</feature>
<feature type="active site" description="For protease 3C activity" evidence="8 9">
    <location>
        <position position="1563"/>
    </location>
</feature>
<feature type="active site" description="For protease 3C activity" evidence="8 9">
    <location>
        <position position="1603"/>
    </location>
</feature>
<feature type="active site" description="For protease 3C activity" evidence="8 9">
    <location>
        <position position="1691"/>
    </location>
</feature>
<feature type="binding site" evidence="7">
    <location>
        <begin position="1230"/>
        <end position="1237"/>
    </location>
    <ligand>
        <name>ATP</name>
        <dbReference type="ChEBI" id="CHEBI:30616"/>
    </ligand>
</feature>
<feature type="site" description="Cleavage" evidence="5">
    <location>
        <begin position="23"/>
        <end position="24"/>
    </location>
</feature>
<feature type="site" description="Cleavage; by protease 3C" evidence="4">
    <location>
        <begin position="245"/>
        <end position="246"/>
    </location>
</feature>
<feature type="site" description="Cleavage; by protease 3C" evidence="4">
    <location>
        <begin position="491"/>
        <end position="492"/>
    </location>
</feature>
<feature type="site" description="Cleavage; partial; by host" evidence="4">
    <location>
        <begin position="765"/>
        <end position="766"/>
    </location>
</feature>
<feature type="site" description="Important for VP1 folding and capsid assembly" evidence="4">
    <location>
        <position position="769"/>
    </location>
</feature>
<feature type="site" description="Cleavage; by protease 3C" evidence="4">
    <location>
        <begin position="836"/>
        <end position="837"/>
    </location>
</feature>
<feature type="site" description="Cleavage; by protease 3C" evidence="4">
    <location>
        <begin position="1087"/>
        <end position="1088"/>
    </location>
</feature>
<feature type="site" description="Cleavage; by protease 3C" evidence="4">
    <location>
        <begin position="1422"/>
        <end position="1423"/>
    </location>
</feature>
<feature type="site" description="Cleavage; by protease 3C" evidence="4">
    <location>
        <begin position="1496"/>
        <end position="1497"/>
    </location>
</feature>
<feature type="site" description="Cleavage; by protease 3C" evidence="4">
    <location>
        <begin position="1519"/>
        <end position="1520"/>
    </location>
</feature>
<feature type="site" description="Cleavage; by protease 3C" evidence="4">
    <location>
        <begin position="1738"/>
        <end position="1739"/>
    </location>
</feature>
<feature type="modified residue" description="O-(5'-phospho-RNA)-tyrosine" evidence="1">
    <location>
        <position position="1499"/>
    </location>
</feature>
<feature type="disulfide bond" description="Interchain" evidence="4">
    <location>
        <position position="1543"/>
    </location>
</feature>
<feature type="helix" evidence="11">
    <location>
        <begin position="1521"/>
        <end position="1531"/>
    </location>
</feature>
<feature type="strand" evidence="11">
    <location>
        <begin position="1532"/>
        <end position="1538"/>
    </location>
</feature>
<feature type="strand" evidence="11">
    <location>
        <begin position="1545"/>
        <end position="1555"/>
    </location>
</feature>
<feature type="strand" evidence="11">
    <location>
        <begin position="1557"/>
        <end position="1561"/>
    </location>
</feature>
<feature type="helix" evidence="11">
    <location>
        <begin position="1562"/>
        <end position="1564"/>
    </location>
</feature>
<feature type="turn" evidence="11">
    <location>
        <begin position="1565"/>
        <end position="1567"/>
    </location>
</feature>
<feature type="helix" evidence="11">
    <location>
        <begin position="1571"/>
        <end position="1573"/>
    </location>
</feature>
<feature type="strand" evidence="11">
    <location>
        <begin position="1574"/>
        <end position="1580"/>
    </location>
</feature>
<feature type="strand" evidence="11">
    <location>
        <begin position="1583"/>
        <end position="1588"/>
    </location>
</feature>
<feature type="helix" evidence="11">
    <location>
        <begin position="1589"/>
        <end position="1591"/>
    </location>
</feature>
<feature type="strand" evidence="11">
    <location>
        <begin position="1592"/>
        <end position="1600"/>
    </location>
</feature>
<feature type="strand" evidence="11">
    <location>
        <begin position="1603"/>
        <end position="1608"/>
    </location>
</feature>
<feature type="helix" evidence="11">
    <location>
        <begin position="1619"/>
        <end position="1621"/>
    </location>
</feature>
<feature type="helix" evidence="11">
    <location>
        <begin position="1625"/>
        <end position="1631"/>
    </location>
</feature>
<feature type="strand" evidence="11">
    <location>
        <begin position="1636"/>
        <end position="1642"/>
    </location>
</feature>
<feature type="strand" evidence="11">
    <location>
        <begin position="1645"/>
        <end position="1651"/>
    </location>
</feature>
<feature type="strand" evidence="11">
    <location>
        <begin position="1655"/>
        <end position="1665"/>
    </location>
</feature>
<feature type="strand" evidence="11">
    <location>
        <begin position="1671"/>
        <end position="1683"/>
    </location>
</feature>
<feature type="strand" evidence="11">
    <location>
        <begin position="1694"/>
        <end position="1698"/>
    </location>
</feature>
<feature type="helix" evidence="11">
    <location>
        <begin position="1700"/>
        <end position="1702"/>
    </location>
</feature>
<feature type="strand" evidence="11">
    <location>
        <begin position="1706"/>
        <end position="1714"/>
    </location>
</feature>
<feature type="strand" evidence="11">
    <location>
        <begin position="1717"/>
        <end position="1722"/>
    </location>
</feature>
<feature type="helix" evidence="11">
    <location>
        <begin position="1725"/>
        <end position="1730"/>
    </location>
</feature>
<reference key="1">
    <citation type="journal article" date="1987" name="Virus Res.">
        <title>The entire nucleotide sequence of the genome of human hepatitis A virus (isolate MBB).</title>
        <authorList>
            <person name="Paul A.V."/>
            <person name="Tada H."/>
            <person name="der Helm K."/>
            <person name="Wissel T."/>
            <person name="Kiehn R."/>
            <person name="Wimmer E."/>
            <person name="Deinhardt F."/>
        </authorList>
    </citation>
    <scope>NUCLEOTIDE SEQUENCE [GENOMIC RNA]</scope>
</reference>
<reference key="2">
    <citation type="journal article" date="2005" name="J. Mol. Biol.">
        <title>Dual modes of modification of hepatitis A virus 3C protease by a serine-derived beta-lactone: selective crystallization and formation of a functional catalytic triad in the active site.</title>
        <authorList>
            <person name="Yin J."/>
            <person name="Bergmann E.M."/>
            <person name="Cherney M.M."/>
            <person name="Lall M.S."/>
            <person name="Jain R.P."/>
            <person name="Vederas J.C."/>
            <person name="James M.N.G."/>
        </authorList>
    </citation>
    <scope>X-RAY CRYSTALLOGRAPHY (1.4 ANGSTROMS) OF 1520-1738 IN COMPLEX WITH THE INHIBITOR N-CBZ-L-SERINE B-LACTONE</scope>
    <scope>ACTIVE SITE (PROTEASE 3C)</scope>
</reference>
<evidence type="ECO:0000250" key="1"/>
<evidence type="ECO:0000250" key="2">
    <source>
        <dbReference type="UniProtKB" id="P03300"/>
    </source>
</evidence>
<evidence type="ECO:0000250" key="3">
    <source>
        <dbReference type="UniProtKB" id="P03303"/>
    </source>
</evidence>
<evidence type="ECO:0000250" key="4">
    <source>
        <dbReference type="UniProtKB" id="P08617"/>
    </source>
</evidence>
<evidence type="ECO:0000255" key="5"/>
<evidence type="ECO:0000255" key="6">
    <source>
        <dbReference type="PROSITE-ProRule" id="PRU00539"/>
    </source>
</evidence>
<evidence type="ECO:0000255" key="7">
    <source>
        <dbReference type="PROSITE-ProRule" id="PRU00551"/>
    </source>
</evidence>
<evidence type="ECO:0000255" key="8">
    <source>
        <dbReference type="PROSITE-ProRule" id="PRU01222"/>
    </source>
</evidence>
<evidence type="ECO:0000269" key="9">
    <source>
    </source>
</evidence>
<evidence type="ECO:0000305" key="10"/>
<evidence type="ECO:0007829" key="11">
    <source>
        <dbReference type="PDB" id="2CXV"/>
    </source>
</evidence>
<organismHost>
    <name type="scientific">Cercopithecus hamlyni</name>
    <name type="common">Owl-faced monkey</name>
    <name type="synonym">Hamlyn's monkey</name>
    <dbReference type="NCBI Taxonomy" id="9536"/>
</organismHost>
<organismHost>
    <name type="scientific">Homo sapiens</name>
    <name type="common">Human</name>
    <dbReference type="NCBI Taxonomy" id="9606"/>
</organismHost>
<organismHost>
    <name type="scientific">Macaca</name>
    <name type="common">macaques</name>
    <dbReference type="NCBI Taxonomy" id="9539"/>
</organismHost>
<organismHost>
    <name type="scientific">Pan troglodytes</name>
    <name type="common">Chimpanzee</name>
    <dbReference type="NCBI Taxonomy" id="9598"/>
</organismHost>
<name>POLG_HAVMB</name>
<protein>
    <recommendedName>
        <fullName>Genome polyprotein</fullName>
    </recommendedName>
    <component>
        <recommendedName>
            <fullName>Capsid protein VP0</fullName>
        </recommendedName>
        <alternativeName>
            <fullName>VP4-VP2</fullName>
        </alternativeName>
    </component>
    <component>
        <recommendedName>
            <fullName>Capsid protein VP4</fullName>
        </recommendedName>
        <alternativeName>
            <fullName>P1A</fullName>
        </alternativeName>
        <alternativeName>
            <fullName>Virion protein 4</fullName>
        </alternativeName>
    </component>
    <component>
        <recommendedName>
            <fullName>Capsid protein VP2</fullName>
        </recommendedName>
        <alternativeName>
            <fullName>P1B</fullName>
        </alternativeName>
        <alternativeName>
            <fullName>Virion protein 2</fullName>
        </alternativeName>
    </component>
    <component>
        <recommendedName>
            <fullName>Capsid protein VP3</fullName>
        </recommendedName>
        <alternativeName>
            <fullName>P1C</fullName>
        </alternativeName>
        <alternativeName>
            <fullName>Virion protein 3</fullName>
        </alternativeName>
    </component>
    <component>
        <recommendedName>
            <fullName>Protein VP1-2A</fullName>
        </recommendedName>
        <alternativeName>
            <fullName>VPX</fullName>
        </alternativeName>
    </component>
    <component>
        <recommendedName>
            <fullName>Capsid protein VP1</fullName>
        </recommendedName>
        <alternativeName>
            <fullName>P1D</fullName>
        </alternativeName>
        <alternativeName>
            <fullName>Virion protein 1</fullName>
        </alternativeName>
    </component>
    <component>
        <recommendedName>
            <fullName>Assembly signal 2A</fullName>
        </recommendedName>
        <alternativeName>
            <fullName evidence="4">pX</fullName>
        </alternativeName>
    </component>
    <component>
        <recommendedName>
            <fullName>Protein 2BC</fullName>
        </recommendedName>
    </component>
    <component>
        <recommendedName>
            <fullName>Protein 2B</fullName>
            <shortName>P2B</shortName>
        </recommendedName>
    </component>
    <component>
        <recommendedName>
            <fullName>Protein 2C</fullName>
            <shortName>P2C</shortName>
            <ecNumber>3.6.1.15</ecNumber>
        </recommendedName>
    </component>
    <component>
        <recommendedName>
            <fullName>Protein 3ABCD</fullName>
            <shortName>P3</shortName>
        </recommendedName>
    </component>
    <component>
        <recommendedName>
            <fullName>Protein 3ABC</fullName>
        </recommendedName>
    </component>
    <component>
        <recommendedName>
            <fullName>Protein 3AB</fullName>
        </recommendedName>
    </component>
    <component>
        <recommendedName>
            <fullName>Protein 3A</fullName>
            <shortName>P3A</shortName>
        </recommendedName>
    </component>
    <component>
        <recommendedName>
            <fullName>Viral protein genome-linked</fullName>
            <shortName>VPg</shortName>
        </recommendedName>
        <alternativeName>
            <fullName>Protein 3B</fullName>
            <shortName>P3B</shortName>
        </alternativeName>
    </component>
    <component>
        <recommendedName>
            <fullName>Protein 3CD</fullName>
        </recommendedName>
    </component>
    <component>
        <recommendedName>
            <fullName>Protease 3C</fullName>
            <shortName>P3C</shortName>
            <ecNumber evidence="4">3.4.22.28</ecNumber>
        </recommendedName>
        <alternativeName>
            <fullName>Picornain 3C</fullName>
        </alternativeName>
    </component>
    <component>
        <recommendedName>
            <fullName>RNA-directed RNA polymerase 3D-POL</fullName>
            <shortName>P3D-POL</shortName>
            <ecNumber evidence="4">2.7.7.48</ecNumber>
        </recommendedName>
    </component>
</protein>
<keyword id="KW-0002">3D-structure</keyword>
<keyword id="KW-0067">ATP-binding</keyword>
<keyword id="KW-0167">Capsid protein</keyword>
<keyword id="KW-0175">Coiled coil</keyword>
<keyword id="KW-0191">Covalent protein-RNA linkage</keyword>
<keyword id="KW-1015">Disulfide bond</keyword>
<keyword id="KW-0347">Helicase</keyword>
<keyword id="KW-1035">Host cytoplasm</keyword>
<keyword id="KW-1036">Host cytoplasmic vesicle</keyword>
<keyword id="KW-1039">Host endosome</keyword>
<keyword id="KW-1043">Host membrane</keyword>
<keyword id="KW-1045">Host mitochondrion</keyword>
<keyword id="KW-1047">Host mitochondrion outer membrane</keyword>
<keyword id="KW-0945">Host-virus interaction</keyword>
<keyword id="KW-0378">Hydrolase</keyword>
<keyword id="KW-1090">Inhibition of host innate immune response by virus</keyword>
<keyword id="KW-1097">Inhibition of host MAVS by virus</keyword>
<keyword id="KW-1113">Inhibition of host RLR pathway by virus</keyword>
<keyword id="KW-0922">Interferon antiviral system evasion</keyword>
<keyword id="KW-0407">Ion channel</keyword>
<keyword id="KW-0406">Ion transport</keyword>
<keyword id="KW-0472">Membrane</keyword>
<keyword id="KW-0547">Nucleotide-binding</keyword>
<keyword id="KW-0548">Nucleotidyltransferase</keyword>
<keyword id="KW-0597">Phosphoprotein</keyword>
<keyword id="KW-0645">Protease</keyword>
<keyword id="KW-0694">RNA-binding</keyword>
<keyword id="KW-0696">RNA-directed RNA polymerase</keyword>
<keyword id="KW-1143">T=pseudo3 icosahedral capsid protein</keyword>
<keyword id="KW-0788">Thiol protease</keyword>
<keyword id="KW-0808">Transferase</keyword>
<keyword id="KW-0812">Transmembrane</keyword>
<keyword id="KW-1133">Transmembrane helix</keyword>
<keyword id="KW-0813">Transport</keyword>
<keyword id="KW-1161">Viral attachment to host cell</keyword>
<keyword id="KW-0899">Viral immunoevasion</keyword>
<keyword id="KW-1182">Viral ion channel</keyword>
<keyword id="KW-0693">Viral RNA replication</keyword>
<keyword id="KW-0946">Virion</keyword>
<keyword id="KW-1160">Virus entry into host cell</keyword>
<dbReference type="EC" id="3.6.1.15"/>
<dbReference type="EC" id="3.4.22.28" evidence="4"/>
<dbReference type="EC" id="2.7.7.48" evidence="4"/>
<dbReference type="EMBL" id="M20273">
    <property type="protein sequence ID" value="AAA45474.1"/>
    <property type="molecule type" value="Genomic_RNA"/>
</dbReference>
<dbReference type="PDB" id="2A4O">
    <property type="method" value="X-ray"/>
    <property type="resolution" value="1.55 A"/>
    <property type="chains" value="A=1520-1738"/>
</dbReference>
<dbReference type="PDB" id="2CXV">
    <property type="method" value="X-ray"/>
    <property type="resolution" value="1.40 A"/>
    <property type="chains" value="A=1520-1738"/>
</dbReference>
<dbReference type="PDBsum" id="2A4O"/>
<dbReference type="PDBsum" id="2CXV"/>
<dbReference type="BMRB" id="P13901"/>
<dbReference type="SMR" id="P13901"/>
<dbReference type="DrugBank" id="DB04634">
    <property type="generic name" value="N-BENZYLOXYCARBONYL-L-SERINE-BETALACTONE"/>
</dbReference>
<dbReference type="DrugBank" id="DB04029">
    <property type="generic name" value="Phenylalanylamide"/>
</dbReference>
<dbReference type="MEROPS" id="C03.005"/>
<dbReference type="EvolutionaryTrace" id="P13901"/>
<dbReference type="Proteomes" id="UP000007904">
    <property type="component" value="Genome"/>
</dbReference>
<dbReference type="GO" id="GO:0044162">
    <property type="term" value="C:host cell cytoplasmic vesicle membrane"/>
    <property type="evidence" value="ECO:0007669"/>
    <property type="project" value="UniProtKB-SubCell"/>
</dbReference>
<dbReference type="GO" id="GO:0044193">
    <property type="term" value="C:host cell mitochondrial outer membrane"/>
    <property type="evidence" value="ECO:0007669"/>
    <property type="project" value="UniProtKB-SubCell"/>
</dbReference>
<dbReference type="GO" id="GO:0072494">
    <property type="term" value="C:host multivesicular body"/>
    <property type="evidence" value="ECO:0007669"/>
    <property type="project" value="UniProtKB-SubCell"/>
</dbReference>
<dbReference type="GO" id="GO:0016020">
    <property type="term" value="C:membrane"/>
    <property type="evidence" value="ECO:0007669"/>
    <property type="project" value="UniProtKB-KW"/>
</dbReference>
<dbReference type="GO" id="GO:0039618">
    <property type="term" value="C:T=pseudo3 icosahedral viral capsid"/>
    <property type="evidence" value="ECO:0007669"/>
    <property type="project" value="UniProtKB-KW"/>
</dbReference>
<dbReference type="GO" id="GO:0005524">
    <property type="term" value="F:ATP binding"/>
    <property type="evidence" value="ECO:0007669"/>
    <property type="project" value="UniProtKB-KW"/>
</dbReference>
<dbReference type="GO" id="GO:0015267">
    <property type="term" value="F:channel activity"/>
    <property type="evidence" value="ECO:0007669"/>
    <property type="project" value="UniProtKB-KW"/>
</dbReference>
<dbReference type="GO" id="GO:0004197">
    <property type="term" value="F:cysteine-type endopeptidase activity"/>
    <property type="evidence" value="ECO:0007669"/>
    <property type="project" value="UniProtKB-EC"/>
</dbReference>
<dbReference type="GO" id="GO:0017111">
    <property type="term" value="F:ribonucleoside triphosphate phosphatase activity"/>
    <property type="evidence" value="ECO:0007669"/>
    <property type="project" value="UniProtKB-EC"/>
</dbReference>
<dbReference type="GO" id="GO:0003723">
    <property type="term" value="F:RNA binding"/>
    <property type="evidence" value="ECO:0007669"/>
    <property type="project" value="UniProtKB-KW"/>
</dbReference>
<dbReference type="GO" id="GO:0003724">
    <property type="term" value="F:RNA helicase activity"/>
    <property type="evidence" value="ECO:0007669"/>
    <property type="project" value="InterPro"/>
</dbReference>
<dbReference type="GO" id="GO:0003968">
    <property type="term" value="F:RNA-directed RNA polymerase activity"/>
    <property type="evidence" value="ECO:0007669"/>
    <property type="project" value="UniProtKB-KW"/>
</dbReference>
<dbReference type="GO" id="GO:0005198">
    <property type="term" value="F:structural molecule activity"/>
    <property type="evidence" value="ECO:0007669"/>
    <property type="project" value="InterPro"/>
</dbReference>
<dbReference type="GO" id="GO:0006351">
    <property type="term" value="P:DNA-templated transcription"/>
    <property type="evidence" value="ECO:0007669"/>
    <property type="project" value="InterPro"/>
</dbReference>
<dbReference type="GO" id="GO:0034220">
    <property type="term" value="P:monoatomic ion transmembrane transport"/>
    <property type="evidence" value="ECO:0007669"/>
    <property type="project" value="UniProtKB-KW"/>
</dbReference>
<dbReference type="GO" id="GO:0006508">
    <property type="term" value="P:proteolysis"/>
    <property type="evidence" value="ECO:0007669"/>
    <property type="project" value="UniProtKB-KW"/>
</dbReference>
<dbReference type="GO" id="GO:0046718">
    <property type="term" value="P:symbiont entry into host cell"/>
    <property type="evidence" value="ECO:0007669"/>
    <property type="project" value="UniProtKB-KW"/>
</dbReference>
<dbReference type="GO" id="GO:0039545">
    <property type="term" value="P:symbiont-mediated suppression of host cytoplasmic pattern recognition receptor signaling pathway via inhibition of MAVS activity"/>
    <property type="evidence" value="ECO:0007669"/>
    <property type="project" value="UniProtKB-KW"/>
</dbReference>
<dbReference type="GO" id="GO:0039694">
    <property type="term" value="P:viral RNA genome replication"/>
    <property type="evidence" value="ECO:0007669"/>
    <property type="project" value="InterPro"/>
</dbReference>
<dbReference type="GO" id="GO:0019062">
    <property type="term" value="P:virion attachment to host cell"/>
    <property type="evidence" value="ECO:0007669"/>
    <property type="project" value="UniProtKB-KW"/>
</dbReference>
<dbReference type="CDD" id="cd23215">
    <property type="entry name" value="Hepatovirus_RdRp"/>
    <property type="match status" value="1"/>
</dbReference>
<dbReference type="CDD" id="cd00205">
    <property type="entry name" value="rhv_like"/>
    <property type="match status" value="2"/>
</dbReference>
<dbReference type="FunFam" id="2.60.120.20:FF:000016">
    <property type="entry name" value="Genome polyprotein"/>
    <property type="match status" value="1"/>
</dbReference>
<dbReference type="FunFam" id="2.60.120.20:FF:000017">
    <property type="entry name" value="Genome polyprotein"/>
    <property type="match status" value="1"/>
</dbReference>
<dbReference type="FunFam" id="3.30.70.270:FF:000111">
    <property type="entry name" value="Genome polyprotein"/>
    <property type="match status" value="1"/>
</dbReference>
<dbReference type="Gene3D" id="1.20.960.20">
    <property type="match status" value="1"/>
</dbReference>
<dbReference type="Gene3D" id="2.60.120.20">
    <property type="match status" value="3"/>
</dbReference>
<dbReference type="Gene3D" id="3.30.70.270">
    <property type="match status" value="1"/>
</dbReference>
<dbReference type="Gene3D" id="2.40.10.10">
    <property type="entry name" value="Trypsin-like serine proteases"/>
    <property type="match status" value="2"/>
</dbReference>
<dbReference type="InterPro" id="IPR049133">
    <property type="entry name" value="2B_soluble"/>
</dbReference>
<dbReference type="InterPro" id="IPR043502">
    <property type="entry name" value="DNA/RNA_pol_sf"/>
</dbReference>
<dbReference type="InterPro" id="IPR004004">
    <property type="entry name" value="Helic/Pol/Pept_Calicivir-typ"/>
</dbReference>
<dbReference type="InterPro" id="IPR000605">
    <property type="entry name" value="Helicase_SF3_ssDNA/RNA_vir"/>
</dbReference>
<dbReference type="InterPro" id="IPR014759">
    <property type="entry name" value="Helicase_SF3_ssRNA_vir"/>
</dbReference>
<dbReference type="InterPro" id="IPR024354">
    <property type="entry name" value="Hepatitis_A_VP1-2A"/>
</dbReference>
<dbReference type="InterPro" id="IPR044067">
    <property type="entry name" value="PCV_3C_PRO"/>
</dbReference>
<dbReference type="InterPro" id="IPR000199">
    <property type="entry name" value="Peptidase_C3A/C3B_picornavir"/>
</dbReference>
<dbReference type="InterPro" id="IPR009003">
    <property type="entry name" value="Peptidase_S1_PA"/>
</dbReference>
<dbReference type="InterPro" id="IPR043504">
    <property type="entry name" value="Peptidase_S1_PA_chymotrypsin"/>
</dbReference>
<dbReference type="InterPro" id="IPR001676">
    <property type="entry name" value="Picornavirus_capsid"/>
</dbReference>
<dbReference type="InterPro" id="IPR043128">
    <property type="entry name" value="Rev_trsase/Diguanyl_cyclase"/>
</dbReference>
<dbReference type="InterPro" id="IPR033703">
    <property type="entry name" value="Rhv-like"/>
</dbReference>
<dbReference type="InterPro" id="IPR001205">
    <property type="entry name" value="RNA-dir_pol_C"/>
</dbReference>
<dbReference type="InterPro" id="IPR007094">
    <property type="entry name" value="RNA-dir_pol_PSvirus"/>
</dbReference>
<dbReference type="InterPro" id="IPR029053">
    <property type="entry name" value="Viral_coat"/>
</dbReference>
<dbReference type="Pfam" id="PF20758">
    <property type="entry name" value="2B_soluble"/>
    <property type="match status" value="1"/>
</dbReference>
<dbReference type="Pfam" id="PF12944">
    <property type="entry name" value="HAV_VP"/>
    <property type="match status" value="1"/>
</dbReference>
<dbReference type="Pfam" id="PF00548">
    <property type="entry name" value="Peptidase_C3"/>
    <property type="match status" value="1"/>
</dbReference>
<dbReference type="Pfam" id="PF00680">
    <property type="entry name" value="RdRP_1"/>
    <property type="match status" value="1"/>
</dbReference>
<dbReference type="Pfam" id="PF00073">
    <property type="entry name" value="Rhv"/>
    <property type="match status" value="2"/>
</dbReference>
<dbReference type="Pfam" id="PF00910">
    <property type="entry name" value="RNA_helicase"/>
    <property type="match status" value="1"/>
</dbReference>
<dbReference type="PRINTS" id="PR00918">
    <property type="entry name" value="CALICVIRUSNS"/>
</dbReference>
<dbReference type="SUPFAM" id="SSF56672">
    <property type="entry name" value="DNA/RNA polymerases"/>
    <property type="match status" value="1"/>
</dbReference>
<dbReference type="SUPFAM" id="SSF88633">
    <property type="entry name" value="Positive stranded ssRNA viruses"/>
    <property type="match status" value="3"/>
</dbReference>
<dbReference type="SUPFAM" id="SSF50494">
    <property type="entry name" value="Trypsin-like serine proteases"/>
    <property type="match status" value="1"/>
</dbReference>
<dbReference type="PROSITE" id="PS51874">
    <property type="entry name" value="PCV_3C_PRO"/>
    <property type="match status" value="1"/>
</dbReference>
<dbReference type="PROSITE" id="PS50507">
    <property type="entry name" value="RDRP_SSRNA_POS"/>
    <property type="match status" value="1"/>
</dbReference>
<dbReference type="PROSITE" id="PS51218">
    <property type="entry name" value="SF3_HELICASE_2"/>
    <property type="match status" value="1"/>
</dbReference>
<comment type="function">
    <molecule>Capsid protein VP1</molecule>
    <text evidence="4">Capsid proteins VP1, VP2, and VP3 form a closed capsid enclosing the viral positive strand RNA genome. All these proteins contain a beta-sheet structure called beta-barrel jelly roll. Together they form an icosahedral capsid (T=3) composed of 60 copies of each VP1, VP2, and VP3, with a diameter of approximately 300 Angstroms. VP1 is situated at the 12 fivefold axes, whereas VP2 and VP3 are located at the quasi-sixfold axes. The naked capsid interacts with the host receptor HAVCR1 to provide virion attachment to and probably entry into the target cell.</text>
</comment>
<comment type="function">
    <molecule>Capsid protein VP2</molecule>
    <text evidence="4">Capsid proteins VP1, VP2, and VP3 form a closed capsid enclosing the viral positive strand RNA genome. All these proteins contain a beta-sheet structure called beta-barrel jelly roll. Together they form an icosahedral capsid (T=3) composed of 60 copies of each VP1, VP2, and VP3, with a diameter of approximately 300 Angstroms. VP1 is situated at the 12 fivefold axes, whereas VP2 and VP3 are located at the quasi-sixfold axes. The naked capsid interacts with the host receptor HAVCR1 to provide virion attachment to and probably entry into the target cell.</text>
</comment>
<comment type="function">
    <molecule>Capsid protein VP3</molecule>
    <text evidence="4">Capsid proteins VP1, VP2, and VP3 form a closed capsid enclosing the viral positive strand RNA genome. All these proteins contain a beta-sheet structure called beta-barrel jelly roll. Together they form an icosahedral capsid (T=3) composed of 60 copies of each VP1, VP2, and VP3, with a diameter of approximately 300 Angstroms. VP1 is situated at the 12 fivefold axes, whereas VP2 and VP3 are located at the quasi-sixfold axes. The naked capsid interacts with the host receptor HAVCR1 to provide virion attachment to and probably entry into the target cell.</text>
</comment>
<comment type="function">
    <molecule>Capsid protein VP0</molecule>
    <text evidence="4">VP0 precursor is a component of the immature procapsids.</text>
</comment>
<comment type="function">
    <molecule>Capsid protein VP4</molecule>
    <text evidence="4">Plays a role in the assembly of the 12 pentamers into an icosahedral structure. Has not been detected in mature virions, supposedly owing to its small size.</text>
</comment>
<comment type="function">
    <molecule>Protein VP1-2A</molecule>
    <text evidence="4">Precursor component of immature procapsids that corresponds to an extended form of the structural protein VP1. After maturation, possibly by the host Cathepsin L, the assembly signal 2A is cleaved to give rise to the mature VP1 protein.</text>
</comment>
<comment type="function">
    <molecule>Protein 2B</molecule>
    <text evidence="4">Functions as a viroporin. Affects membrane integrity and causes an increase in membrane permeability. Involved in host intracellular membrane rearrangements probably to give rise to the viral factories. Does not disrupt calcium homeostasis or glycoprotein trafficking. Antagonizes the innate immune response of the host by suppressing IFN-beta synthesis, which it achieves by interfering with the RIG-I/IFIH1 pathway.</text>
</comment>
<comment type="function">
    <molecule>Protein 2BC</molecule>
    <text evidence="4">Affects membrane integrity and causes an increase in membrane permeability.</text>
</comment>
<comment type="function">
    <molecule>Protein 2C</molecule>
    <text evidence="4">Associates with and induces structural rearrangements of intracellular membranes. Displays RNA-binding activity.</text>
</comment>
<comment type="function">
    <molecule>Protein 3ABC</molecule>
    <text evidence="4">The precursor 3ABC is targeted to the mitochondrial membrane where protease 3C activity cleaves and inhibits the host antiviral protein MAVS, thereby disrupting activation of IRF3 through the IFIH1/MDA5 pathway. In vivo, the protease activity of 3ABC precursor is more efficient in cleaving the 2BC precursor than that of protein 3C. The 3ABC precursor may therefore play a role in the proteolytic processing of the polyprotein. Possible viroporin.</text>
</comment>
<comment type="function">
    <molecule>Protein 3AB</molecule>
    <text evidence="4">Interacts with the 3CD precursor and with RNA structures found at both the 5'- and 3'-termini of the viral genome. Since the 3AB precursor contains the hydrophobic domain 3A, it probably anchors the whole viral replicase complex to intracellular membranes on which viral RNA synthesis occurs.</text>
</comment>
<comment type="function">
    <molecule>Protein 3A</molecule>
    <text evidence="4">May serve as membrane anchor to the 3AB and 3ABC precursors via its hydrophobic domain. May interact with RNA.</text>
</comment>
<comment type="function">
    <molecule>Viral protein genome-linked</molecule>
    <text evidence="2 4">Acts as a primer for viral RNA replication and remains covalently bound to viral genomic RNA. VPg is uridylylated prior to priming replication into VPg-pUpU. The VPg-pUpU is then used as primer on the genomic RNA poly(A) by the RNA-dependent RNA polymerase to replicate the viral genome.</text>
</comment>
<comment type="function">
    <molecule>Protease 3C</molecule>
    <text evidence="4">Cysteine protease that generates mature viral proteins from the precursor polyprotein. In addition to its proteolytic activity, it binds to viral RNA, and thus influences viral genome replication. RNA and substrate bind cooperatively to the protease. Cleaves IKBKG/NEMO to impair innate immune signaling. Cleaves host PABPC1 which may participate in the switch of viral translation to RNA synthesis.</text>
</comment>
<comment type="function">
    <molecule>Protein 3CD</molecule>
    <text evidence="4">Interacts with the 3AB precursor and with RNA structures found at both the 5'- and 3'-termini of the viral genome. Disrupts TLR3 signaling by degrading the host adapter protein TICAM1/TRIF.</text>
</comment>
<comment type="function">
    <molecule>RNA-directed RNA polymerase 3D-POL</molecule>
    <text evidence="4">Replicates genomic and antigenomic RNA by recognizing replications specific signals.</text>
</comment>
<comment type="catalytic activity">
    <reaction evidence="4 6">
        <text>RNA(n) + a ribonucleoside 5'-triphosphate = RNA(n+1) + diphosphate</text>
        <dbReference type="Rhea" id="RHEA:21248"/>
        <dbReference type="Rhea" id="RHEA-COMP:14527"/>
        <dbReference type="Rhea" id="RHEA-COMP:17342"/>
        <dbReference type="ChEBI" id="CHEBI:33019"/>
        <dbReference type="ChEBI" id="CHEBI:61557"/>
        <dbReference type="ChEBI" id="CHEBI:140395"/>
        <dbReference type="EC" id="2.7.7.48"/>
    </reaction>
</comment>
<comment type="catalytic activity">
    <reaction evidence="4">
        <text>a ribonucleoside 5'-triphosphate + H2O = a ribonucleoside 5'-diphosphate + phosphate + H(+)</text>
        <dbReference type="Rhea" id="RHEA:23680"/>
        <dbReference type="ChEBI" id="CHEBI:15377"/>
        <dbReference type="ChEBI" id="CHEBI:15378"/>
        <dbReference type="ChEBI" id="CHEBI:43474"/>
        <dbReference type="ChEBI" id="CHEBI:57930"/>
        <dbReference type="ChEBI" id="CHEBI:61557"/>
        <dbReference type="EC" id="3.6.1.15"/>
    </reaction>
</comment>
<comment type="catalytic activity">
    <reaction evidence="8">
        <text>Selective cleavage of Gln-|-Gly bond in the poliovirus polyprotein. In other picornavirus reactions Glu may be substituted for Gln, and Ser or Thr for Gly.</text>
        <dbReference type="EC" id="3.4.22.28"/>
    </reaction>
</comment>
<comment type="subunit">
    <molecule>Protein 2B</molecule>
    <text evidence="4">Homodimer. Homomultimer; probably interacts with membranes in a multimeric form. Seems to assemble into amyloid-like fibers.</text>
</comment>
<comment type="subunit">
    <molecule>Protein 3AB</molecule>
    <text evidence="4">Homodimer. Monomer. Interacts with protein 3CD.</text>
</comment>
<comment type="subunit">
    <molecule>Protein 3A</molecule>
    <text evidence="4">Interacts with host ACBD3 (By similarity).</text>
</comment>
<comment type="subunit">
    <molecule>Protein 3CD</molecule>
    <text evidence="4">Interacts with protein 3AB.</text>
</comment>
<comment type="subunit">
    <molecule>Protein 3ABC</molecule>
    <text evidence="4">Interacts with human MAVS.</text>
</comment>
<comment type="subunit">
    <molecule>Protease 3C</molecule>
    <text evidence="4">Homodimer; disulfide-linked.</text>
</comment>
<comment type="subunit">
    <molecule>Protein VP1-2A</molecule>
    <text evidence="4">Homopentamer. Homooligomer.</text>
</comment>
<comment type="subunit">
    <molecule>Capsid protein VP1</molecule>
    <text evidence="4">Interacts with capsid protein VP2. Interacts with capsid protein VP3.</text>
</comment>
<comment type="subunit">
    <molecule>Capsid protein VP2</molecule>
    <text evidence="4">Interacts with capsid protein VP1. Interacts with capsid protein VP3.</text>
</comment>
<comment type="subunit">
    <molecule>Capsid protein VP3</molecule>
    <text evidence="4">Interacts with capsid protein VP1. Interacts with capsid protein VP2.</text>
</comment>
<comment type="subcellular location">
    <molecule>Capsid protein VP2</molecule>
    <subcellularLocation>
        <location evidence="4">Virion</location>
    </subcellularLocation>
    <subcellularLocation>
        <location evidence="4">Host endosome</location>
        <location evidence="4">Host multivesicular body</location>
    </subcellularLocation>
    <text evidence="4">The egress of newly formed virions occurs through an exosome-like mechanism involving endosomal budding of viral capsids into multivesicular bodies.</text>
</comment>
<comment type="subcellular location">
    <molecule>Capsid protein VP3</molecule>
    <subcellularLocation>
        <location evidence="4">Virion</location>
    </subcellularLocation>
    <subcellularLocation>
        <location evidence="4">Host endosome</location>
        <location evidence="4">Host multivesicular body</location>
    </subcellularLocation>
    <text evidence="4">The egress of newly formed virions occurs through an exosome-like mechanism involving endosomal budding of viral capsids into multivesicular bodies.</text>
</comment>
<comment type="subcellular location">
    <molecule>Capsid protein VP1</molecule>
    <subcellularLocation>
        <location evidence="4">Virion</location>
    </subcellularLocation>
    <subcellularLocation>
        <location evidence="4">Host endosome</location>
        <location evidence="4">Host multivesicular body</location>
    </subcellularLocation>
    <text evidence="4">The egress of newly formed virions occurs through an exosome-like mechanism involving endosomal budding of viral capsids into multivesicular bodies.</text>
</comment>
<comment type="subcellular location">
    <molecule>Capsid protein VP4</molecule>
    <subcellularLocation>
        <location evidence="4">Virion</location>
    </subcellularLocation>
    <text evidence="4">Present in the full mature virion. The egress of newly formed virions occurs through an exosome-like mechanism involving endosomal budding of viral capsids into multivesicular bodies.</text>
</comment>
<comment type="subcellular location">
    <molecule>Protein 2B</molecule>
    <subcellularLocation>
        <location evidence="4">Host membrane</location>
        <topology evidence="4">Peripheral membrane protein</topology>
    </subcellularLocation>
    <text evidence="4">Probably localizes to intracellular membrane vesicles that are induced after virus infection as the site for viral RNA replication.</text>
</comment>
<comment type="subcellular location">
    <molecule>Protein 2C</molecule>
    <subcellularLocation>
        <location evidence="4">Host membrane</location>
        <topology evidence="4">Single-pass membrane protein</topology>
    </subcellularLocation>
    <text evidence="4">Probably localizes to intracellular membrane vesicles that are induced after virus infection as the site for viral RNA replication. May associate with membranes through a N-terminal amphipathic helix.</text>
</comment>
<comment type="subcellular location">
    <molecule>Protein 3ABC</molecule>
    <subcellularLocation>
        <location evidence="4">Host membrane</location>
        <topology evidence="5">Single-pass membrane protein</topology>
    </subcellularLocation>
    <subcellularLocation>
        <location evidence="4">Host mitochondrion outer membrane</location>
        <topology evidence="4">Single-pass membrane protein</topology>
    </subcellularLocation>
    <text evidence="4">Probably localizes to intracellular membrane vesicles that are induced after virus infection as the site for viral RNA replication.</text>
</comment>
<comment type="subcellular location">
    <molecule>Protein 3AB</molecule>
    <subcellularLocation>
        <location evidence="4">Host membrane</location>
        <topology evidence="5">Single-pass membrane protein</topology>
    </subcellularLocation>
    <text evidence="4">Probably localizes to intracellular membrane vesicles that are induced after virus infection as the site for viral RNA replication.</text>
</comment>
<comment type="subcellular location">
    <molecule>Protein 3A</molecule>
    <subcellularLocation>
        <location evidence="4">Host membrane</location>
        <topology evidence="5">Single-pass membrane protein</topology>
    </subcellularLocation>
    <text evidence="4">Probably localizes to intracellular membrane vesicles that are induced after virus infection as the site for viral RNA replication.</text>
</comment>
<comment type="subcellular location">
    <molecule>Viral protein genome-linked</molecule>
    <subcellularLocation>
        <location evidence="4">Virion</location>
    </subcellularLocation>
</comment>
<comment type="subcellular location">
    <molecule>Protease 3C</molecule>
    <subcellularLocation>
        <location evidence="4">Host cytoplasm</location>
    </subcellularLocation>
</comment>
<comment type="subcellular location">
    <molecule>RNA-directed RNA polymerase 3D-POL</molecule>
    <subcellularLocation>
        <location evidence="4">Host cytoplasmic vesicle membrane</location>
        <topology evidence="4">Peripheral membrane protein</topology>
        <orientation evidence="4">Cytoplasmic side</orientation>
    </subcellularLocation>
    <text evidence="4">Interacts with membranes in a complex with viral protein 3AB. Probably localizes to the surface of intracellular membrane vesicles that are induced after virus infection as the site for viral RNA replication. These vesicles are derived from the endoplasmic reticulum.</text>
</comment>
<comment type="domain">
    <molecule>Protein VP1-2A</molecule>
    <text evidence="4">The assembly signal 2A region mediates pentamerization of P1-2A.</text>
</comment>
<comment type="domain">
    <molecule>Genome polyprotein</molecule>
    <text evidence="4">Late-budding domains (L domains) are short sequence motifs essential for viral particle budding. They recruit proteins of the host ESCRT machinery (Endosomal Sorting Complex Required for Transport) or ESCRT-associated proteins. The genome polyprotein contains two L domains: a tandem of (L)YPX(n)L domain which is known to bind the PDCD6IP/ALIX adaptater protein.</text>
</comment>
<comment type="domain">
    <molecule>Capsid protein VP2</molecule>
    <text evidence="4">Late-budding domains (L domains) are short sequence motifs essential for viral particle budding. They recruit proteins of the host ESCRT machinery (Endosomal Sorting Complex Required for Transport) or ESCRT-associated proteins. Capsid protein VP2 contains two L domains: a tandem of (L)YPX(n)L domain which is known to bind the Alix adaptater protein.</text>
</comment>
<comment type="domain">
    <molecule>Protein 2B</molecule>
    <text evidence="4">The C-terminus displays a membrane-penetrating ability.</text>
</comment>
<comment type="PTM">
    <molecule>Genome polyprotein</molecule>
    <text evidence="4">Specific enzymatic cleavages by viral protease in vivo yield a variety of precursors and mature proteins. Polyprotein processing intermediates are produced, such as P1-2A which is a functional precursor of the structural proteins, VP0 which is a VP4-VP2 precursor, VP1-2A precursor, 3ABC precursor which is a stable and catalytically active precursor of 3A, 3B and 3C proteins, 3AB and 3CD precursors. The assembly signal 2A is removed from VP1-2A by a host protease, possibly host Cathepsin L. This cleavage occurs over a region of 3 amino-acids probably generating VP1 proteins with heterogeneous C-termini.</text>
</comment>
<comment type="PTM">
    <molecule>Capsid protein VP0</molecule>
    <text evidence="3">During virion maturation, immature virions are rendered infectious following cleavage of VP0 into VP4 and VP2. This maturation seems to be an autocatalytic event triggered by the presence of RNA in the capsid and is followed by a conformational change of the particle.</text>
</comment>
<comment type="PTM">
    <molecule>Protein VP1-2A</molecule>
    <text evidence="4">The assembly signal 2A is removed from VP1-2A by a host protease, possibly host Cathepsin L in naked virions. This cleavage does not occur in enveloped virions. This cleavage occurs over a region of 3 amino-acids probably generating VP1 proteins with heterogeneous C-termini.</text>
</comment>
<comment type="PTM">
    <molecule>Viral protein genome-linked</molecule>
    <text evidence="2">VPg is uridylylated prior to priming replication into VPg-pUpU.</text>
</comment>
<comment type="PTM">
    <molecule>Capsid protein VP4</molecule>
    <text evidence="4">Unlike other picornaviruses, does not seem to be myristoylated.</text>
</comment>
<comment type="miscellaneous">
    <molecule>Genome polyprotein</molecule>
    <text evidence="4">The need for an intact eIF4G factor for the initiation of translation of HAV results in an inability to shut off host protein synthesis by a mechanism similar to that of other picornaviruses.</text>
</comment>
<comment type="miscellaneous">
    <molecule>Genome polyprotein</molecule>
    <text evidence="4">During infection, enveloped virions (eHAV) are released from cells. These eHAV are cloaked in host-derived membranes and resemble exosomes. The membrane of eHAV is devoid of viral proteins and thus prevents their neutralization by antibodies. eHAV budding is dependent on ESCRT-associated proteins VPS4B and PDCD6IP/ALIX. eHAV are produced and released in the serum and plasma, but not in bile and feces which only contain the naked, nonenveloped virions. It is likely that eHAV also use HAVCR1 as a functional receptor to infect cells, an evolutionary trait that may enhance HAV infectivity.</text>
</comment>
<comment type="similarity">
    <text evidence="10">Belongs to the picornaviridae polyprotein family.</text>
</comment>
<comment type="caution">
    <text evidence="4">It is uncertain whether Met-1 or Met-3 is the initiator.</text>
</comment>
<sequence length="2227" mass="251427">MNMSRQGIFQTVGSGLDHILSLADIEEEQMIQSVDRTAVTGASYFTSVDQSSVHTAEVGSHQVEPLRTSVDKPGSKKTQGEKFFLIHSADWLTTHALFHEVAKLDVVKLLYNEQFAVQGLLRYHTYARFGIEIQVQINPTPFQQGGLICAMVPGDQSYGSIASLTVYPHGLLNCNINNVVRIKVPFIYTRGAYHFKDPQYPVWELTIRVWSELNIGTGTSAYTSLNVLARFTDLELHGLTPLSTQMMRNEFRVSTTENVVNLSNYEDARAKMSFALDQEDWKSDPSQGGGIKITHFTTWTSIPTLAAQFPFNASDSVGQQIKVIPVDPYFFQMTNTNPDQKCITALASICQMFCFWRGDLVFDFQVFPTKYHSGRLLFCFVPGNELIDVSGITLKQATTAPCAVMDITGVQSTLRFRVPWISDTPYRVNRYTKSAHQKGEYTAIGKLIVYCYNRLTSPSNVASHVRVNVYLSAINLECFAPLYHAMDVTTQVGDDSGGFSTTVSTEQNVPDPQVGITTMKDLKGKANRGKMDVSGVQAPVGAITTIEDPVLAKKVPETFPELKPGESRHTSDHMSIYKFMGRSHFLCTFTFNSNNKEYTFPITLSSTSNPPHGLPSTLRWFFNLFQLYRGPLDLTIIIIGATDVDGMAWFTPVGLAVDTPWVEKESALSIDYKTALGAVRFNTRRTGNIQIRLPWYSYLYAVSGALDGLGDKTDSTFGLVSIQIANYNHSDEYLSFSCYLSVTEQSEFYFPRAPLNSNAMLSTESMMSRIAAGDLESSVDDPRSEEDKRFESHIECRKPYKELRLEVGKQRLKYAQEELSNEVLPPPRKKKGLFSQAKISLFYTEEHEIMKFSWRGVTADTRALRRFGFSLAAGRSVWTLEMDAGVLTGRLIRLNDEKWTEMKDDKIVSLIEKFTSNKYWSKVNFPHGMLDLEEIAANSKDFPNMSETDLCFLLHWLNPKKINLADRMLGLSGVQEIKEQGVGLIAECRTFLDSIAGTLKSMMFGFHHSVTVEIINTVLCFVKSGILLYVMQQLNQDEHSHIIGLLRVMNYVDIGCSVISCGKVFSKMLETVFNWQMDSRMMELRTQSFSNWLRDICSGITIFKNFKDAIYWLYTKLNDFYEVNYGKKKDILNILKDNQQKIEKAIEEADKFSILQIQDVEKFEQYQKGVDLIQKLRTVHSMAQVDPNLMVHLSPLRDCIARVHQKLKNLGSINQAMVTRCEPVVCYLYGKRGGGKSLTSIALATKICKHYGVEPEKNIYTKPVASDYWDGYSGQLVCIIDDIGQNTTDEDWSDFCQLVSGCPLRLNMASLEEKGRHFSSPFIIATSNWSNPSPKTVYVKEAIDRRLHFKVEVNPASFSKNPHNDMLNVNLAKTNDAIKDMSCVDLIMDGHNVSLMDLLSSLVMTVEIRKQNMTAFMELWSQGISDDDNDSAMAEFFQSFPSGEPSNSKLSGFFQSVTNHKWVAVGAAVGILGVLVGGWFVYKHFSRKEEEPIPAEGVYHGVTKPKQVIKLDADPVESQSTLEIAGLVRKNLVQFGVGEKNGCVRWVMNALGVKDDWLLVPSHAYKFEKDYEMMEFYFNRGGTYYSISAGNVVIQSLDVGFQDVVLMKVPTIPKFRDITQHFIKKGDVPRALNRLATLVTTVNGTPMLISEGPLKMEEKATYVHKKNDGTTVDLTVDQAWRGKGEGLPGMCGGALVSSNQSIQNAILGIHVAGGNSILVAKLVTQEMFQNIDKKIESQRIMKVEFTQCSMNVVSKTLFRKSPIHHHIDKTMINFPAAMPFSKAEIDPMAMMLSKYSLPIVEEPEDYKEASIFYQNKIVGKTQLVDDFLDLDMAITGAPGIDAINMDSSPGFPYVQERLTKRDLIWLDENGLLLGVHPRLAQRILFNTVMMENCSDLDVVFTTCPKDELRPLEKVLESKTRAIDACPLDYTILCRMYWGPAISYFHLNPGFHTGVAIGIDPDCQWDELFKTMIRFGDVGLDLDFSAFDASLSPFMIREAGRIMSELSGTPSHFGTALMNTIIYSKHLLYNCCYHVCGSMPSGSPCTALLNSIINNVNLYYVFSKIFGKSPVFFCQALKILCYGDDVLIVFSRDVQIDNLDLIGQKIVDEFKKLGMTATSADKNVPQLKPVSELTFLKRSFNLVEDRIRPAISEKTIWSLIAWQRSNAEFEQNLENAQWFAFMHGYEFYQKFYYFVQSCLEKEMIEYRLKSYDWWRMRFYDQCFICDLS</sequence>
<organism>
    <name type="scientific">Human hepatitis A virus genotype IB (isolate MBB)</name>
    <name type="common">HHAV</name>
    <name type="synonym">Human hepatitis A virus (isolate Human/Northern Africa/MBB/1978)</name>
    <dbReference type="NCBI Taxonomy" id="12100"/>
    <lineage>
        <taxon>Viruses</taxon>
        <taxon>Riboviria</taxon>
        <taxon>Orthornavirae</taxon>
        <taxon>Pisuviricota</taxon>
        <taxon>Pisoniviricetes</taxon>
        <taxon>Picornavirales</taxon>
        <taxon>Picornaviridae</taxon>
        <taxon>Heptrevirinae</taxon>
        <taxon>Hepatovirus</taxon>
        <taxon>Hepatovirus ahepa</taxon>
        <taxon>Hepatovirus A</taxon>
    </lineage>
</organism>
<accession>P13901</accession>
<accession>Q81083</accession>
<accession>Q81084</accession>
<accession>Q81085</accession>
<accession>Q81086</accession>
<accession>Q81087</accession>
<accession>Q81088</accession>
<accession>Q81089</accession>
<accession>Q81090</accession>
<accession>Q81091</accession>
<accession>Q81092</accession>
<accession>Q81093</accession>